<gene>
    <name type="primary">ubiD</name>
    <name type="ordered locus">PBPRA3538</name>
</gene>
<keyword id="KW-1003">Cell membrane</keyword>
<keyword id="KW-0210">Decarboxylase</keyword>
<keyword id="KW-0456">Lyase</keyword>
<keyword id="KW-0472">Membrane</keyword>
<keyword id="KW-1185">Reference proteome</keyword>
<keyword id="KW-0831">Ubiquinone biosynthesis</keyword>
<comment type="function">
    <text evidence="1">Catalyzes the decarboxylation of 3-octaprenyl-4-hydroxy benzoate to 2-octaprenylphenol.</text>
</comment>
<comment type="cofactor">
    <cofactor evidence="1">
        <name>a divalent metal cation</name>
        <dbReference type="ChEBI" id="CHEBI:60240"/>
    </cofactor>
</comment>
<comment type="pathway">
    <text>Cofactor biosynthesis; ubiquinone biosynthesis.</text>
</comment>
<comment type="subunit">
    <text evidence="1">Homohexamer.</text>
</comment>
<comment type="subcellular location">
    <subcellularLocation>
        <location evidence="1">Cell membrane</location>
        <topology evidence="1">Peripheral membrane protein</topology>
    </subcellularLocation>
</comment>
<comment type="similarity">
    <text evidence="2">Belongs to the UbiD family.</text>
</comment>
<reference key="1">
    <citation type="journal article" date="2005" name="Science">
        <title>Life at depth: Photobacterium profundum genome sequence and expression analysis.</title>
        <authorList>
            <person name="Vezzi A."/>
            <person name="Campanaro S."/>
            <person name="D'Angelo M."/>
            <person name="Simonato F."/>
            <person name="Vitulo N."/>
            <person name="Lauro F.M."/>
            <person name="Cestaro A."/>
            <person name="Malacrida G."/>
            <person name="Simionati B."/>
            <person name="Cannata N."/>
            <person name="Romualdi C."/>
            <person name="Bartlett D.H."/>
            <person name="Valle G."/>
        </authorList>
    </citation>
    <scope>NUCLEOTIDE SEQUENCE [LARGE SCALE GENOMIC DNA]</scope>
    <source>
        <strain>ATCC BAA-1253 / SS9</strain>
    </source>
</reference>
<accession>Q6LLL9</accession>
<proteinExistence type="inferred from homology"/>
<name>UBID_PHOPR</name>
<feature type="chain" id="PRO_0000267677" description="3-octaprenyl-4-hydroxybenzoate carboxy-lyase">
    <location>
        <begin position="1"/>
        <end position="631"/>
    </location>
</feature>
<feature type="region of interest" description="Unknown insert">
    <location>
        <begin position="452"/>
        <end position="593"/>
    </location>
</feature>
<evidence type="ECO:0000250" key="1"/>
<evidence type="ECO:0000305" key="2"/>
<dbReference type="EC" id="4.1.1.-"/>
<dbReference type="EMBL" id="CR378674">
    <property type="protein sequence ID" value="CAG21809.1"/>
    <property type="molecule type" value="Genomic_DNA"/>
</dbReference>
<dbReference type="RefSeq" id="WP_011220049.1">
    <property type="nucleotide sequence ID" value="NC_006370.1"/>
</dbReference>
<dbReference type="SMR" id="Q6LLL9"/>
<dbReference type="STRING" id="298386.PBPRA3538"/>
<dbReference type="KEGG" id="ppr:PBPRA3538"/>
<dbReference type="eggNOG" id="COG0043">
    <property type="taxonomic scope" value="Bacteria"/>
</dbReference>
<dbReference type="HOGENOM" id="CLU_023348_4_0_6"/>
<dbReference type="UniPathway" id="UPA00232"/>
<dbReference type="Proteomes" id="UP000000593">
    <property type="component" value="Chromosome 1"/>
</dbReference>
<dbReference type="GO" id="GO:0005829">
    <property type="term" value="C:cytosol"/>
    <property type="evidence" value="ECO:0007669"/>
    <property type="project" value="TreeGrafter"/>
</dbReference>
<dbReference type="GO" id="GO:0005886">
    <property type="term" value="C:plasma membrane"/>
    <property type="evidence" value="ECO:0007669"/>
    <property type="project" value="UniProtKB-SubCell"/>
</dbReference>
<dbReference type="GO" id="GO:0008694">
    <property type="term" value="F:3-octaprenyl-4-hydroxybenzoate carboxy-lyase activity"/>
    <property type="evidence" value="ECO:0007669"/>
    <property type="project" value="TreeGrafter"/>
</dbReference>
<dbReference type="GO" id="GO:0006744">
    <property type="term" value="P:ubiquinone biosynthetic process"/>
    <property type="evidence" value="ECO:0007669"/>
    <property type="project" value="UniProtKB-UniPathway"/>
</dbReference>
<dbReference type="FunFam" id="1.20.5.570:FF:000001">
    <property type="entry name" value="3-octaprenyl-4-hydroxybenzoate carboxy-lyase"/>
    <property type="match status" value="1"/>
</dbReference>
<dbReference type="FunFam" id="3.40.1670.10:FF:000001">
    <property type="entry name" value="3-octaprenyl-4-hydroxybenzoate carboxy-lyase"/>
    <property type="match status" value="2"/>
</dbReference>
<dbReference type="Gene3D" id="1.20.5.570">
    <property type="entry name" value="Single helix bin"/>
    <property type="match status" value="1"/>
</dbReference>
<dbReference type="Gene3D" id="3.40.1670.10">
    <property type="entry name" value="UbiD C-terminal domain-like"/>
    <property type="match status" value="2"/>
</dbReference>
<dbReference type="InterPro" id="IPR002830">
    <property type="entry name" value="UbiD"/>
</dbReference>
<dbReference type="InterPro" id="IPR049381">
    <property type="entry name" value="UbiD-like_C"/>
</dbReference>
<dbReference type="InterPro" id="IPR049383">
    <property type="entry name" value="UbiD-like_N"/>
</dbReference>
<dbReference type="InterPro" id="IPR048304">
    <property type="entry name" value="UbiD_Rift_dom"/>
</dbReference>
<dbReference type="NCBIfam" id="NF008175">
    <property type="entry name" value="PRK10922.1"/>
    <property type="match status" value="1"/>
</dbReference>
<dbReference type="NCBIfam" id="TIGR00148">
    <property type="entry name" value="UbiD family decarboxylase"/>
    <property type="match status" value="1"/>
</dbReference>
<dbReference type="PANTHER" id="PTHR30108">
    <property type="entry name" value="3-OCTAPRENYL-4-HYDROXYBENZOATE CARBOXY-LYASE-RELATED"/>
    <property type="match status" value="1"/>
</dbReference>
<dbReference type="PANTHER" id="PTHR30108:SF17">
    <property type="entry name" value="FERULIC ACID DECARBOXYLASE 1"/>
    <property type="match status" value="1"/>
</dbReference>
<dbReference type="Pfam" id="PF01977">
    <property type="entry name" value="UbiD"/>
    <property type="match status" value="1"/>
</dbReference>
<dbReference type="Pfam" id="PF20696">
    <property type="entry name" value="UbiD_C"/>
    <property type="match status" value="2"/>
</dbReference>
<dbReference type="Pfam" id="PF20695">
    <property type="entry name" value="UbiD_N"/>
    <property type="match status" value="1"/>
</dbReference>
<dbReference type="SUPFAM" id="SSF50475">
    <property type="entry name" value="FMN-binding split barrel"/>
    <property type="match status" value="1"/>
</dbReference>
<dbReference type="SUPFAM" id="SSF143968">
    <property type="entry name" value="UbiD C-terminal domain-like"/>
    <property type="match status" value="2"/>
</dbReference>
<organism>
    <name type="scientific">Photobacterium profundum (strain SS9)</name>
    <dbReference type="NCBI Taxonomy" id="298386"/>
    <lineage>
        <taxon>Bacteria</taxon>
        <taxon>Pseudomonadati</taxon>
        <taxon>Pseudomonadota</taxon>
        <taxon>Gammaproteobacteria</taxon>
        <taxon>Vibrionales</taxon>
        <taxon>Vibrionaceae</taxon>
        <taxon>Photobacterium</taxon>
    </lineage>
</organism>
<protein>
    <recommendedName>
        <fullName>3-octaprenyl-4-hydroxybenzoate carboxy-lyase</fullName>
        <ecNumber>4.1.1.-</ecNumber>
    </recommendedName>
    <alternativeName>
        <fullName>Polyprenyl p-hydroxybenzoate decarboxylase</fullName>
    </alternativeName>
</protein>
<sequence>MKFKDLRDFIDYLEQEGQLKRIKQPIDPNQEITEICDRTLRAGGPALLFENPIGYDIPILANLFGTPERVAMGMGRQDVKELREVGKLLAYLKEPEPPRGFRDAMDKLPVFKQVFNMPTKRLRKAPCQQVIWQGDDVDLDKIPVMSCWPDDVAPLLTWGLTITKGPNKPRQNLGIYRQQKIAKNKVIMRWLAHRGGALDLRDWMDTHPGEPFPISVAFGADPATILGAVTPVPDTLSEYAFAGLLRGSKTEVVKSLSNDLDIPASAEIVLEGYIDPNEFADEGPYGDHTGYYNEVERHHVFTITHVTMREDPIYHSTYTGRPPDEPAVLGVALNEVFVPILQKQFPEIVDFYLPPEGCSYRMAVVTMKKQYPGHAKRVMMGVWSFLRQFMYTKFVIVLDDDVNARDWNSVIQAMTTRMDPVRDTLLIESTPIDSLDFASPVVGLGSKMGLDATVKWEAETASTPSGTSQAAPDFDIETGTRNLLMQFPEIVDFYLPQEADKNSMAIVSIKKDAAGHATRVMDGVWSFLSQFTDAKFVIVCDDDVNVRDWNDVIWAITTRMDPSRDTLLIANAPIDSLDLTSPVVGLGSKMGLDATNKWQGETAREWGRPITKDPEIVAKVDAIWNELGILD</sequence>